<evidence type="ECO:0000255" key="1">
    <source>
        <dbReference type="HAMAP-Rule" id="MF_01852"/>
    </source>
</evidence>
<proteinExistence type="inferred from homology"/>
<protein>
    <recommendedName>
        <fullName evidence="1">Threonylcarbamoyl-AMP synthase</fullName>
        <shortName evidence="1">TC-AMP synthase</shortName>
        <ecNumber evidence="1">2.7.7.87</ecNumber>
    </recommendedName>
    <alternativeName>
        <fullName evidence="1">L-threonylcarbamoyladenylate synthase</fullName>
    </alternativeName>
    <alternativeName>
        <fullName evidence="1">t(6)A37 threonylcarbamoyladenosine biosynthesis protein TsaC</fullName>
    </alternativeName>
    <alternativeName>
        <fullName evidence="1">tRNA threonylcarbamoyladenosine biosynthesis protein TsaC</fullName>
    </alternativeName>
</protein>
<name>TSAC_VIBVU</name>
<sequence>MVSNLQQVVKALKQGQVVAYPTEGVFGLGCDPDNEVAIERLLTIKQRPSDKGLILIAADFQQLQPYLDLTSLSAEQLQRVFATWPGPYTWVMPASARASALVTGYRQTVAVRVSDHPLVQKLCSEYGKPLTSTSANLSGQTECKTVEQVQDQLGSQISVILFGEIGERHRPSEIRDARTEQLLRQG</sequence>
<organism>
    <name type="scientific">Vibrio vulnificus (strain CMCP6)</name>
    <dbReference type="NCBI Taxonomy" id="216895"/>
    <lineage>
        <taxon>Bacteria</taxon>
        <taxon>Pseudomonadati</taxon>
        <taxon>Pseudomonadota</taxon>
        <taxon>Gammaproteobacteria</taxon>
        <taxon>Vibrionales</taxon>
        <taxon>Vibrionaceae</taxon>
        <taxon>Vibrio</taxon>
    </lineage>
</organism>
<keyword id="KW-0067">ATP-binding</keyword>
<keyword id="KW-0963">Cytoplasm</keyword>
<keyword id="KW-0547">Nucleotide-binding</keyword>
<keyword id="KW-0548">Nucleotidyltransferase</keyword>
<keyword id="KW-0808">Transferase</keyword>
<keyword id="KW-0819">tRNA processing</keyword>
<reference key="1">
    <citation type="submission" date="2002-12" db="EMBL/GenBank/DDBJ databases">
        <title>Complete genome sequence of Vibrio vulnificus CMCP6.</title>
        <authorList>
            <person name="Rhee J.H."/>
            <person name="Kim S.Y."/>
            <person name="Chung S.S."/>
            <person name="Kim J.J."/>
            <person name="Moon Y.H."/>
            <person name="Jeong H."/>
            <person name="Choy H.E."/>
        </authorList>
    </citation>
    <scope>NUCLEOTIDE SEQUENCE [LARGE SCALE GENOMIC DNA]</scope>
    <source>
        <strain>CMCP6</strain>
    </source>
</reference>
<comment type="function">
    <text evidence="1">Required for the formation of a threonylcarbamoyl group on adenosine at position 37 (t(6)A37) in tRNAs that read codons beginning with adenine. Catalyzes the conversion of L-threonine, HCO(3)(-)/CO(2) and ATP to give threonylcarbamoyl-AMP (TC-AMP) as the acyladenylate intermediate, with the release of diphosphate.</text>
</comment>
<comment type="catalytic activity">
    <reaction evidence="1">
        <text>L-threonine + hydrogencarbonate + ATP = L-threonylcarbamoyladenylate + diphosphate + H2O</text>
        <dbReference type="Rhea" id="RHEA:36407"/>
        <dbReference type="ChEBI" id="CHEBI:15377"/>
        <dbReference type="ChEBI" id="CHEBI:17544"/>
        <dbReference type="ChEBI" id="CHEBI:30616"/>
        <dbReference type="ChEBI" id="CHEBI:33019"/>
        <dbReference type="ChEBI" id="CHEBI:57926"/>
        <dbReference type="ChEBI" id="CHEBI:73682"/>
        <dbReference type="EC" id="2.7.7.87"/>
    </reaction>
</comment>
<comment type="subcellular location">
    <subcellularLocation>
        <location evidence="1">Cytoplasm</location>
    </subcellularLocation>
</comment>
<comment type="similarity">
    <text evidence="1">Belongs to the SUA5 family. TsaC subfamily.</text>
</comment>
<feature type="chain" id="PRO_0000353006" description="Threonylcarbamoyl-AMP synthase">
    <location>
        <begin position="1"/>
        <end position="186"/>
    </location>
</feature>
<feature type="domain" description="YrdC-like" evidence="1">
    <location>
        <begin position="2"/>
        <end position="186"/>
    </location>
</feature>
<accession>Q8DDD6</accession>
<gene>
    <name evidence="1" type="primary">tsaC</name>
    <name type="synonym">rimN</name>
    <name type="ordered locus">VV1_1055</name>
</gene>
<dbReference type="EC" id="2.7.7.87" evidence="1"/>
<dbReference type="EMBL" id="AE016795">
    <property type="protein sequence ID" value="AAO09542.1"/>
    <property type="molecule type" value="Genomic_DNA"/>
</dbReference>
<dbReference type="SMR" id="Q8DDD6"/>
<dbReference type="KEGG" id="vvu:VV1_1055"/>
<dbReference type="HOGENOM" id="CLU_031397_6_0_6"/>
<dbReference type="Proteomes" id="UP000002275">
    <property type="component" value="Chromosome 1"/>
</dbReference>
<dbReference type="GO" id="GO:0005737">
    <property type="term" value="C:cytoplasm"/>
    <property type="evidence" value="ECO:0007669"/>
    <property type="project" value="UniProtKB-SubCell"/>
</dbReference>
<dbReference type="GO" id="GO:0005524">
    <property type="term" value="F:ATP binding"/>
    <property type="evidence" value="ECO:0007669"/>
    <property type="project" value="UniProtKB-UniRule"/>
</dbReference>
<dbReference type="GO" id="GO:0003725">
    <property type="term" value="F:double-stranded RNA binding"/>
    <property type="evidence" value="ECO:0007669"/>
    <property type="project" value="InterPro"/>
</dbReference>
<dbReference type="GO" id="GO:0061710">
    <property type="term" value="F:L-threonylcarbamoyladenylate synthase"/>
    <property type="evidence" value="ECO:0007669"/>
    <property type="project" value="UniProtKB-EC"/>
</dbReference>
<dbReference type="GO" id="GO:0000049">
    <property type="term" value="F:tRNA binding"/>
    <property type="evidence" value="ECO:0007669"/>
    <property type="project" value="TreeGrafter"/>
</dbReference>
<dbReference type="GO" id="GO:0006450">
    <property type="term" value="P:regulation of translational fidelity"/>
    <property type="evidence" value="ECO:0007669"/>
    <property type="project" value="TreeGrafter"/>
</dbReference>
<dbReference type="GO" id="GO:0002949">
    <property type="term" value="P:tRNA threonylcarbamoyladenosine modification"/>
    <property type="evidence" value="ECO:0007669"/>
    <property type="project" value="UniProtKB-UniRule"/>
</dbReference>
<dbReference type="FunFam" id="3.90.870.10:FF:000004">
    <property type="entry name" value="Threonylcarbamoyl-AMP synthase"/>
    <property type="match status" value="1"/>
</dbReference>
<dbReference type="Gene3D" id="3.90.870.10">
    <property type="entry name" value="DHBP synthase"/>
    <property type="match status" value="1"/>
</dbReference>
<dbReference type="HAMAP" id="MF_01852">
    <property type="entry name" value="TsaC"/>
    <property type="match status" value="1"/>
</dbReference>
<dbReference type="InterPro" id="IPR017945">
    <property type="entry name" value="DHBP_synth_RibB-like_a/b_dom"/>
</dbReference>
<dbReference type="InterPro" id="IPR006070">
    <property type="entry name" value="Sua5-like_dom"/>
</dbReference>
<dbReference type="InterPro" id="IPR023535">
    <property type="entry name" value="TC-AMP_synthase"/>
</dbReference>
<dbReference type="InterPro" id="IPR050156">
    <property type="entry name" value="TC-AMP_synthase_SUA5"/>
</dbReference>
<dbReference type="NCBIfam" id="TIGR00057">
    <property type="entry name" value="L-threonylcarbamoyladenylate synthase"/>
    <property type="match status" value="1"/>
</dbReference>
<dbReference type="PANTHER" id="PTHR17490">
    <property type="entry name" value="SUA5"/>
    <property type="match status" value="1"/>
</dbReference>
<dbReference type="PANTHER" id="PTHR17490:SF18">
    <property type="entry name" value="THREONYLCARBAMOYL-AMP SYNTHASE"/>
    <property type="match status" value="1"/>
</dbReference>
<dbReference type="Pfam" id="PF01300">
    <property type="entry name" value="Sua5_yciO_yrdC"/>
    <property type="match status" value="1"/>
</dbReference>
<dbReference type="SUPFAM" id="SSF55821">
    <property type="entry name" value="YrdC/RibB"/>
    <property type="match status" value="1"/>
</dbReference>
<dbReference type="PROSITE" id="PS51163">
    <property type="entry name" value="YRDC"/>
    <property type="match status" value="1"/>
</dbReference>